<sequence>MAAQKVKKTRRRKERKNVEHGAAHIQSTFNNSIVTLTDAKGNALAWASAGGLGFKGSRKSTPFAAQMAAETAAKAAMEHGLKSVEVYVKGPGAGREAAIRSLQAAGLEVTLIKDVTPIPHNGCRPPKRRRV</sequence>
<dbReference type="EMBL" id="BA000016">
    <property type="protein sequence ID" value="BAB82084.1"/>
    <property type="molecule type" value="Genomic_DNA"/>
</dbReference>
<dbReference type="RefSeq" id="WP_003454436.1">
    <property type="nucleotide sequence ID" value="NC_003366.1"/>
</dbReference>
<dbReference type="SMR" id="Q8XHU9"/>
<dbReference type="STRING" id="195102.gene:10491695"/>
<dbReference type="GeneID" id="93001036"/>
<dbReference type="KEGG" id="cpe:CPE2378"/>
<dbReference type="HOGENOM" id="CLU_072439_5_0_9"/>
<dbReference type="Proteomes" id="UP000000818">
    <property type="component" value="Chromosome"/>
</dbReference>
<dbReference type="GO" id="GO:1990904">
    <property type="term" value="C:ribonucleoprotein complex"/>
    <property type="evidence" value="ECO:0007669"/>
    <property type="project" value="UniProtKB-KW"/>
</dbReference>
<dbReference type="GO" id="GO:0005840">
    <property type="term" value="C:ribosome"/>
    <property type="evidence" value="ECO:0007669"/>
    <property type="project" value="UniProtKB-KW"/>
</dbReference>
<dbReference type="GO" id="GO:0019843">
    <property type="term" value="F:rRNA binding"/>
    <property type="evidence" value="ECO:0007669"/>
    <property type="project" value="UniProtKB-UniRule"/>
</dbReference>
<dbReference type="GO" id="GO:0003735">
    <property type="term" value="F:structural constituent of ribosome"/>
    <property type="evidence" value="ECO:0007669"/>
    <property type="project" value="InterPro"/>
</dbReference>
<dbReference type="GO" id="GO:0006412">
    <property type="term" value="P:translation"/>
    <property type="evidence" value="ECO:0007669"/>
    <property type="project" value="UniProtKB-UniRule"/>
</dbReference>
<dbReference type="FunFam" id="3.30.420.80:FF:000001">
    <property type="entry name" value="30S ribosomal protein S11"/>
    <property type="match status" value="1"/>
</dbReference>
<dbReference type="Gene3D" id="3.30.420.80">
    <property type="entry name" value="Ribosomal protein S11"/>
    <property type="match status" value="1"/>
</dbReference>
<dbReference type="HAMAP" id="MF_01310">
    <property type="entry name" value="Ribosomal_uS11"/>
    <property type="match status" value="1"/>
</dbReference>
<dbReference type="InterPro" id="IPR001971">
    <property type="entry name" value="Ribosomal_uS11"/>
</dbReference>
<dbReference type="InterPro" id="IPR019981">
    <property type="entry name" value="Ribosomal_uS11_bac-type"/>
</dbReference>
<dbReference type="InterPro" id="IPR018102">
    <property type="entry name" value="Ribosomal_uS11_CS"/>
</dbReference>
<dbReference type="InterPro" id="IPR036967">
    <property type="entry name" value="Ribosomal_uS11_sf"/>
</dbReference>
<dbReference type="NCBIfam" id="NF003698">
    <property type="entry name" value="PRK05309.1"/>
    <property type="match status" value="1"/>
</dbReference>
<dbReference type="NCBIfam" id="TIGR03632">
    <property type="entry name" value="uS11_bact"/>
    <property type="match status" value="1"/>
</dbReference>
<dbReference type="PANTHER" id="PTHR11759">
    <property type="entry name" value="40S RIBOSOMAL PROTEIN S14/30S RIBOSOMAL PROTEIN S11"/>
    <property type="match status" value="1"/>
</dbReference>
<dbReference type="Pfam" id="PF00411">
    <property type="entry name" value="Ribosomal_S11"/>
    <property type="match status" value="1"/>
</dbReference>
<dbReference type="PIRSF" id="PIRSF002131">
    <property type="entry name" value="Ribosomal_S11"/>
    <property type="match status" value="1"/>
</dbReference>
<dbReference type="SUPFAM" id="SSF53137">
    <property type="entry name" value="Translational machinery components"/>
    <property type="match status" value="1"/>
</dbReference>
<dbReference type="PROSITE" id="PS00054">
    <property type="entry name" value="RIBOSOMAL_S11"/>
    <property type="match status" value="1"/>
</dbReference>
<name>RS11_CLOPE</name>
<feature type="chain" id="PRO_0000123135" description="Small ribosomal subunit protein uS11">
    <location>
        <begin position="1"/>
        <end position="131"/>
    </location>
</feature>
<feature type="region of interest" description="Disordered" evidence="2">
    <location>
        <begin position="1"/>
        <end position="23"/>
    </location>
</feature>
<feature type="compositionally biased region" description="Basic residues" evidence="2">
    <location>
        <begin position="1"/>
        <end position="15"/>
    </location>
</feature>
<reference key="1">
    <citation type="journal article" date="2002" name="Proc. Natl. Acad. Sci. U.S.A.">
        <title>Complete genome sequence of Clostridium perfringens, an anaerobic flesh-eater.</title>
        <authorList>
            <person name="Shimizu T."/>
            <person name="Ohtani K."/>
            <person name="Hirakawa H."/>
            <person name="Ohshima K."/>
            <person name="Yamashita A."/>
            <person name="Shiba T."/>
            <person name="Ogasawara N."/>
            <person name="Hattori M."/>
            <person name="Kuhara S."/>
            <person name="Hayashi H."/>
        </authorList>
    </citation>
    <scope>NUCLEOTIDE SEQUENCE [LARGE SCALE GENOMIC DNA]</scope>
    <source>
        <strain>13 / Type A</strain>
    </source>
</reference>
<proteinExistence type="inferred from homology"/>
<protein>
    <recommendedName>
        <fullName evidence="1">Small ribosomal subunit protein uS11</fullName>
    </recommendedName>
    <alternativeName>
        <fullName evidence="3">30S ribosomal protein S11</fullName>
    </alternativeName>
</protein>
<evidence type="ECO:0000255" key="1">
    <source>
        <dbReference type="HAMAP-Rule" id="MF_01310"/>
    </source>
</evidence>
<evidence type="ECO:0000256" key="2">
    <source>
        <dbReference type="SAM" id="MobiDB-lite"/>
    </source>
</evidence>
<evidence type="ECO:0000305" key="3"/>
<keyword id="KW-1185">Reference proteome</keyword>
<keyword id="KW-0687">Ribonucleoprotein</keyword>
<keyword id="KW-0689">Ribosomal protein</keyword>
<keyword id="KW-0694">RNA-binding</keyword>
<keyword id="KW-0699">rRNA-binding</keyword>
<gene>
    <name evidence="1" type="primary">rpsK</name>
    <name type="ordered locus">CPE2378</name>
</gene>
<comment type="function">
    <text evidence="1">Located on the platform of the 30S subunit, it bridges several disparate RNA helices of the 16S rRNA. Forms part of the Shine-Dalgarno cleft in the 70S ribosome.</text>
</comment>
<comment type="subunit">
    <text evidence="1">Part of the 30S ribosomal subunit. Interacts with proteins S7 and S18. Binds to IF-3.</text>
</comment>
<comment type="similarity">
    <text evidence="1">Belongs to the universal ribosomal protein uS11 family.</text>
</comment>
<accession>Q8XHU9</accession>
<organism>
    <name type="scientific">Clostridium perfringens (strain 13 / Type A)</name>
    <dbReference type="NCBI Taxonomy" id="195102"/>
    <lineage>
        <taxon>Bacteria</taxon>
        <taxon>Bacillati</taxon>
        <taxon>Bacillota</taxon>
        <taxon>Clostridia</taxon>
        <taxon>Eubacteriales</taxon>
        <taxon>Clostridiaceae</taxon>
        <taxon>Clostridium</taxon>
    </lineage>
</organism>